<evidence type="ECO:0000250" key="1"/>
<evidence type="ECO:0000255" key="2">
    <source>
        <dbReference type="PROSITE-ProRule" id="PRU00152"/>
    </source>
</evidence>
<evidence type="ECO:0000255" key="3">
    <source>
        <dbReference type="PROSITE-ProRule" id="PRU00726"/>
    </source>
</evidence>
<evidence type="ECO:0000269" key="4">
    <source>
    </source>
</evidence>
<evidence type="ECO:0000305" key="5"/>
<name>LOX15_SOLTU</name>
<accession>Q43191</accession>
<dbReference type="EC" id="1.13.11.58"/>
<dbReference type="EMBL" id="U60202">
    <property type="protein sequence ID" value="AAB67865.1"/>
    <property type="molecule type" value="mRNA"/>
</dbReference>
<dbReference type="PIR" id="T07775">
    <property type="entry name" value="T07775"/>
</dbReference>
<dbReference type="RefSeq" id="NP_001274916.1">
    <property type="nucleotide sequence ID" value="NM_001287987.1"/>
</dbReference>
<dbReference type="SMR" id="Q43191"/>
<dbReference type="FunCoup" id="Q43191">
    <property type="interactions" value="87"/>
</dbReference>
<dbReference type="STRING" id="4113.Q43191"/>
<dbReference type="BindingDB" id="Q43191"/>
<dbReference type="ChEMBL" id="CHEMBL2189149"/>
<dbReference type="PaxDb" id="4113-PGSC0003DMT400028158"/>
<dbReference type="EnsemblPlants" id="RHC08H1G1067.2.1">
    <property type="protein sequence ID" value="RHC08H1G1067.2.1"/>
    <property type="gene ID" value="RHC08H1G1067.2"/>
</dbReference>
<dbReference type="GeneID" id="102577714"/>
<dbReference type="Gramene" id="RHC08H1G1067.2.1">
    <property type="protein sequence ID" value="RHC08H1G1067.2.1"/>
    <property type="gene ID" value="RHC08H1G1067.2"/>
</dbReference>
<dbReference type="KEGG" id="sot:102577714"/>
<dbReference type="eggNOG" id="ENOG502QVKD">
    <property type="taxonomic scope" value="Eukaryota"/>
</dbReference>
<dbReference type="InParanoid" id="Q43191"/>
<dbReference type="OrthoDB" id="407298at2759"/>
<dbReference type="UniPathway" id="UPA00382"/>
<dbReference type="PRO" id="PR:Q43191"/>
<dbReference type="Proteomes" id="UP000011115">
    <property type="component" value="Unassembled WGS sequence"/>
</dbReference>
<dbReference type="ExpressionAtlas" id="Q43191">
    <property type="expression patterns" value="baseline and differential"/>
</dbReference>
<dbReference type="GO" id="GO:0005737">
    <property type="term" value="C:cytoplasm"/>
    <property type="evidence" value="ECO:0007669"/>
    <property type="project" value="UniProtKB-SubCell"/>
</dbReference>
<dbReference type="GO" id="GO:1990136">
    <property type="term" value="F:linoleate 9S-lipoxygenase activity"/>
    <property type="evidence" value="ECO:0007669"/>
    <property type="project" value="UniProtKB-EC"/>
</dbReference>
<dbReference type="GO" id="GO:0046872">
    <property type="term" value="F:metal ion binding"/>
    <property type="evidence" value="ECO:0007669"/>
    <property type="project" value="UniProtKB-KW"/>
</dbReference>
<dbReference type="GO" id="GO:0016702">
    <property type="term" value="F:oxidoreductase activity, acting on single donors with incorporation of molecular oxygen, incorporation of two atoms of oxygen"/>
    <property type="evidence" value="ECO:0000318"/>
    <property type="project" value="GO_Central"/>
</dbReference>
<dbReference type="GO" id="GO:0006633">
    <property type="term" value="P:fatty acid biosynthetic process"/>
    <property type="evidence" value="ECO:0007669"/>
    <property type="project" value="UniProtKB-KW"/>
</dbReference>
<dbReference type="GO" id="GO:0034440">
    <property type="term" value="P:lipid oxidation"/>
    <property type="evidence" value="ECO:0000318"/>
    <property type="project" value="GO_Central"/>
</dbReference>
<dbReference type="GO" id="GO:0031408">
    <property type="term" value="P:oxylipin biosynthetic process"/>
    <property type="evidence" value="ECO:0007669"/>
    <property type="project" value="UniProtKB-UniPathway"/>
</dbReference>
<dbReference type="CDD" id="cd01751">
    <property type="entry name" value="PLAT_LH2"/>
    <property type="match status" value="1"/>
</dbReference>
<dbReference type="FunFam" id="1.20.245.10:FF:000002">
    <property type="entry name" value="Lipoxygenase"/>
    <property type="match status" value="1"/>
</dbReference>
<dbReference type="FunFam" id="2.60.60.20:FF:000015">
    <property type="entry name" value="Lipoxygenase"/>
    <property type="match status" value="1"/>
</dbReference>
<dbReference type="FunFam" id="3.10.450.60:FF:000002">
    <property type="entry name" value="Lipoxygenase"/>
    <property type="match status" value="1"/>
</dbReference>
<dbReference type="FunFam" id="4.10.372.10:FF:000001">
    <property type="entry name" value="Lipoxygenase"/>
    <property type="match status" value="1"/>
</dbReference>
<dbReference type="FunFam" id="4.10.375.10:FF:000001">
    <property type="entry name" value="Lipoxygenase"/>
    <property type="match status" value="1"/>
</dbReference>
<dbReference type="Gene3D" id="3.10.450.60">
    <property type="match status" value="1"/>
</dbReference>
<dbReference type="Gene3D" id="4.10.375.10">
    <property type="entry name" value="Lipoxygenase-1, Domain 2"/>
    <property type="match status" value="1"/>
</dbReference>
<dbReference type="Gene3D" id="4.10.372.10">
    <property type="entry name" value="Lipoxygenase-1, Domain 3"/>
    <property type="match status" value="1"/>
</dbReference>
<dbReference type="Gene3D" id="1.20.245.10">
    <property type="entry name" value="Lipoxygenase-1, Domain 5"/>
    <property type="match status" value="1"/>
</dbReference>
<dbReference type="Gene3D" id="2.60.60.20">
    <property type="entry name" value="PLAT/LH2 domain"/>
    <property type="match status" value="1"/>
</dbReference>
<dbReference type="InterPro" id="IPR000907">
    <property type="entry name" value="LipOase"/>
</dbReference>
<dbReference type="InterPro" id="IPR013819">
    <property type="entry name" value="LipOase_C"/>
</dbReference>
<dbReference type="InterPro" id="IPR036226">
    <property type="entry name" value="LipOase_C_sf"/>
</dbReference>
<dbReference type="InterPro" id="IPR020834">
    <property type="entry name" value="LipOase_CS"/>
</dbReference>
<dbReference type="InterPro" id="IPR020833">
    <property type="entry name" value="LipOase_Fe_BS"/>
</dbReference>
<dbReference type="InterPro" id="IPR001246">
    <property type="entry name" value="LipOase_plant"/>
</dbReference>
<dbReference type="InterPro" id="IPR042057">
    <property type="entry name" value="Lipoxy_PLAT/LH2"/>
</dbReference>
<dbReference type="InterPro" id="IPR027433">
    <property type="entry name" value="Lipoxygenase_dom_3"/>
</dbReference>
<dbReference type="InterPro" id="IPR001024">
    <property type="entry name" value="PLAT/LH2_dom"/>
</dbReference>
<dbReference type="InterPro" id="IPR036392">
    <property type="entry name" value="PLAT/LH2_dom_sf"/>
</dbReference>
<dbReference type="PANTHER" id="PTHR11771">
    <property type="entry name" value="LIPOXYGENASE"/>
    <property type="match status" value="1"/>
</dbReference>
<dbReference type="Pfam" id="PF00305">
    <property type="entry name" value="Lipoxygenase"/>
    <property type="match status" value="1"/>
</dbReference>
<dbReference type="Pfam" id="PF01477">
    <property type="entry name" value="PLAT"/>
    <property type="match status" value="1"/>
</dbReference>
<dbReference type="PRINTS" id="PR00087">
    <property type="entry name" value="LIPOXYGENASE"/>
</dbReference>
<dbReference type="PRINTS" id="PR00468">
    <property type="entry name" value="PLTLPOXGNASE"/>
</dbReference>
<dbReference type="SMART" id="SM00308">
    <property type="entry name" value="LH2"/>
    <property type="match status" value="1"/>
</dbReference>
<dbReference type="SUPFAM" id="SSF49723">
    <property type="entry name" value="Lipase/lipooxygenase domain (PLAT/LH2 domain)"/>
    <property type="match status" value="1"/>
</dbReference>
<dbReference type="SUPFAM" id="SSF48484">
    <property type="entry name" value="Lipoxigenase"/>
    <property type="match status" value="1"/>
</dbReference>
<dbReference type="PROSITE" id="PS00711">
    <property type="entry name" value="LIPOXYGENASE_1"/>
    <property type="match status" value="1"/>
</dbReference>
<dbReference type="PROSITE" id="PS00081">
    <property type="entry name" value="LIPOXYGENASE_2"/>
    <property type="match status" value="1"/>
</dbReference>
<dbReference type="PROSITE" id="PS51393">
    <property type="entry name" value="LIPOXYGENASE_3"/>
    <property type="match status" value="1"/>
</dbReference>
<dbReference type="PROSITE" id="PS50095">
    <property type="entry name" value="PLAT"/>
    <property type="match status" value="1"/>
</dbReference>
<gene>
    <name type="primary">LOX1.5</name>
    <name type="synonym">POTLX-3</name>
</gene>
<organism>
    <name type="scientific">Solanum tuberosum</name>
    <name type="common">Potato</name>
    <dbReference type="NCBI Taxonomy" id="4113"/>
    <lineage>
        <taxon>Eukaryota</taxon>
        <taxon>Viridiplantae</taxon>
        <taxon>Streptophyta</taxon>
        <taxon>Embryophyta</taxon>
        <taxon>Tracheophyta</taxon>
        <taxon>Spermatophyta</taxon>
        <taxon>Magnoliopsida</taxon>
        <taxon>eudicotyledons</taxon>
        <taxon>Gunneridae</taxon>
        <taxon>Pentapetalae</taxon>
        <taxon>asterids</taxon>
        <taxon>lamiids</taxon>
        <taxon>Solanales</taxon>
        <taxon>Solanaceae</taxon>
        <taxon>Solanoideae</taxon>
        <taxon>Solaneae</taxon>
        <taxon>Solanum</taxon>
    </lineage>
</organism>
<feature type="chain" id="PRO_0000412923" description="Probable linoleate 9S-lipoxygenase 5">
    <location>
        <begin position="1"/>
        <end position="862"/>
    </location>
</feature>
<feature type="domain" description="PLAT" evidence="2">
    <location>
        <begin position="36"/>
        <end position="161"/>
    </location>
</feature>
<feature type="domain" description="Lipoxygenase" evidence="3">
    <location>
        <begin position="164"/>
        <end position="862"/>
    </location>
</feature>
<feature type="binding site" evidence="3">
    <location>
        <position position="523"/>
    </location>
    <ligand>
        <name>Fe cation</name>
        <dbReference type="ChEBI" id="CHEBI:24875"/>
        <note>catalytic</note>
    </ligand>
</feature>
<feature type="binding site" evidence="3">
    <location>
        <position position="528"/>
    </location>
    <ligand>
        <name>Fe cation</name>
        <dbReference type="ChEBI" id="CHEBI:24875"/>
        <note>catalytic</note>
    </ligand>
</feature>
<feature type="binding site" evidence="3">
    <location>
        <position position="714"/>
    </location>
    <ligand>
        <name>Fe cation</name>
        <dbReference type="ChEBI" id="CHEBI:24875"/>
        <note>catalytic</note>
    </ligand>
</feature>
<feature type="binding site" evidence="3">
    <location>
        <position position="718"/>
    </location>
    <ligand>
        <name>Fe cation</name>
        <dbReference type="ChEBI" id="CHEBI:24875"/>
        <note>catalytic</note>
    </ligand>
</feature>
<feature type="binding site" evidence="3">
    <location>
        <position position="862"/>
    </location>
    <ligand>
        <name>Fe cation</name>
        <dbReference type="ChEBI" id="CHEBI:24875"/>
        <note>catalytic</note>
    </ligand>
</feature>
<protein>
    <recommendedName>
        <fullName>Probable linoleate 9S-lipoxygenase 5</fullName>
        <ecNumber>1.13.11.58</ecNumber>
    </recommendedName>
    <alternativeName>
        <fullName>Leaf lipoxygenase</fullName>
    </alternativeName>
</protein>
<sequence length="862" mass="97778">MLLEKIVEAISGRSEDNGKKVKGTIVLMKKNVLDFNDVNASLLDGVLEFLGKRVSLQLISVVHADPGNSLQGKRSNPAYLEKWLTTGTSLVAGESAFDVTFDWDEDIGVPGAFIINNFHFNEFYLKSLTLEDVPNHGNVHFVCNSWVYPAKKYKSERIFFANQAYLPGETPEPLRNYREKELVNLRGNGNGKLEEWDRVYDYALYNDLGDPEKGKQYARTILGGSAEYPYPRRGRTGRKPTKADPKSESRIPLLMSLDIYVPRDERFGHIKLSDFLTYALKSIVQFLIPEFQALFDSTPDEFDSFEDVLKLYEGGIKLPQGPFLKALTDSIPLEILKEIIRTDGEGKFKFPTPQVIQEDKSSWRTDEEFAREMLAGVNPVIISRLQEFPPKSQLDSEVYGNQNSTITKEHIENTLDGLTIDDAIKTNRLYILNHHDILMPYVRRINTTNTKLYASRTLLFLQDDGTMKPVAIELSLPHPDGDELGAVSKVYTPADQGVEGSIWQLAKAYVAVNDSGVHQLISHWLNTHAAIEPFVIATNRQLSVLHPIHKLLHPHFRDTMNINALARQILINAGGVLEMTVFPAKYAMEMSAVVYKSWVFPEQALPADLIKRGVAVEDSSSPHGVRLLIQDYPYAVDGLEIWSAIKSWVTEYCNFYYKSDELVLKDNELQAWWKELREEGHGDKKDEPWWPKMQTRQELKDSCTIIIWIASALHAAVNFGQYPYAGYLPNRPTLSRRFMPEPGTPEYEELKTNPDKAYLKTITPQLQTLLGISLIEILSRHASDEIYLGQRDSSEWTKDQEPIAAFERFGKKLSEIEDQIIQMNGDKKWKNRSGPVNVPYTLLFPTSEQGLTGKGIPNSVSI</sequence>
<keyword id="KW-0963">Cytoplasm</keyword>
<keyword id="KW-0223">Dioxygenase</keyword>
<keyword id="KW-0275">Fatty acid biosynthesis</keyword>
<keyword id="KW-0276">Fatty acid metabolism</keyword>
<keyword id="KW-0408">Iron</keyword>
<keyword id="KW-0444">Lipid biosynthesis</keyword>
<keyword id="KW-0443">Lipid metabolism</keyword>
<keyword id="KW-0479">Metal-binding</keyword>
<keyword id="KW-0560">Oxidoreductase</keyword>
<keyword id="KW-0925">Oxylipin biosynthesis</keyword>
<keyword id="KW-1185">Reference proteome</keyword>
<reference key="1">
    <citation type="online journal article" date="1996" name="Plant Gene Register">
        <title>Nucleotide sequence of a cDNA clone for a lipoxygenase from abscisic acid-treated potato leaves.</title>
        <authorList>
            <person name="Kolomiets M.V."/>
            <person name="Hannapel D.J."/>
            <person name="Gladon R.J."/>
        </authorList>
        <locator>PGR96-069</locator>
    </citation>
    <scope>NUCLEOTIDE SEQUENCE [MRNA]</scope>
    <source>
        <strain>cv. Berolina</strain>
    </source>
</reference>
<reference key="2">
    <citation type="journal article" date="2000" name="Plant Physiol.">
        <title>A leaf lipoxygenase of potato induced specifically by pathogen infection.</title>
        <authorList>
            <person name="Kolomiets M.V."/>
            <person name="Chen H."/>
            <person name="Gladon R.J."/>
            <person name="Braun E.J."/>
            <person name="Hannapel D.J."/>
        </authorList>
    </citation>
    <scope>INDUCTION BY PATHOGEN; ETHYLENE AND JASMONATE</scope>
    <scope>TISSUE SPECIFICITY</scope>
</reference>
<comment type="function">
    <text>Plant lipoxygenases may be involved in a number of diverse aspects of plant physiology including growth and development, pest resistance, and senescence or responses to wounding. May contribute to cell death during the hypersensitive response (HR) by the massive production of free fatty acid hydroperoxides. Catalyzes the hydroperoxidation of lipids containing a cis,cis-1,4-pentadiene structure.</text>
</comment>
<comment type="catalytic activity">
    <reaction>
        <text>(9Z,12Z)-octadecadienoate + O2 = (9S)-hydroperoxy-(10E,12Z)-octadecadienoate</text>
        <dbReference type="Rhea" id="RHEA:30291"/>
        <dbReference type="ChEBI" id="CHEBI:15379"/>
        <dbReference type="ChEBI" id="CHEBI:30245"/>
        <dbReference type="ChEBI" id="CHEBI:60955"/>
        <dbReference type="EC" id="1.13.11.58"/>
    </reaction>
</comment>
<comment type="cofactor">
    <cofactor evidence="3">
        <name>Fe cation</name>
        <dbReference type="ChEBI" id="CHEBI:24875"/>
    </cofactor>
    <text evidence="3">Binds 1 Fe cation per subunit. Iron is tightly bound.</text>
</comment>
<comment type="pathway">
    <text evidence="3">Lipid metabolism; oxylipin biosynthesis.</text>
</comment>
<comment type="subunit">
    <text evidence="1">Monomer.</text>
</comment>
<comment type="subcellular location">
    <subcellularLocation>
        <location evidence="3">Cytoplasm</location>
    </subcellularLocation>
</comment>
<comment type="tissue specificity">
    <text evidence="4">Not detected in leaves, stems, flowers, roots, tubers and stolons during normal growth and development.</text>
</comment>
<comment type="induction">
    <text evidence="4">Up-regulated within 6 hours after pathogen infection, ethylene or jasmonate treatments. Not induced by wounding.</text>
</comment>
<comment type="similarity">
    <text evidence="5">Belongs to the lipoxygenase family.</text>
</comment>
<proteinExistence type="evidence at transcript level"/>